<keyword id="KW-0312">Gluconeogenesis</keyword>
<keyword id="KW-0324">Glycolysis</keyword>
<keyword id="KW-0413">Isomerase</keyword>
<dbReference type="EC" id="5.4.2.11" evidence="1"/>
<dbReference type="EMBL" id="AE003849">
    <property type="protein sequence ID" value="AAF84699.1"/>
    <property type="molecule type" value="Genomic_DNA"/>
</dbReference>
<dbReference type="PIR" id="B82625">
    <property type="entry name" value="B82625"/>
</dbReference>
<dbReference type="RefSeq" id="WP_010894359.1">
    <property type="nucleotide sequence ID" value="NC_002488.3"/>
</dbReference>
<dbReference type="SMR" id="Q9PC88"/>
<dbReference type="STRING" id="160492.XF_1893"/>
<dbReference type="KEGG" id="xfa:XF_1893"/>
<dbReference type="eggNOG" id="COG0588">
    <property type="taxonomic scope" value="Bacteria"/>
</dbReference>
<dbReference type="HOGENOM" id="CLU_033323_1_1_6"/>
<dbReference type="UniPathway" id="UPA00109">
    <property type="reaction ID" value="UER00186"/>
</dbReference>
<dbReference type="Proteomes" id="UP000000812">
    <property type="component" value="Chromosome"/>
</dbReference>
<dbReference type="GO" id="GO:0004619">
    <property type="term" value="F:phosphoglycerate mutase activity"/>
    <property type="evidence" value="ECO:0007669"/>
    <property type="project" value="UniProtKB-EC"/>
</dbReference>
<dbReference type="GO" id="GO:0006094">
    <property type="term" value="P:gluconeogenesis"/>
    <property type="evidence" value="ECO:0007669"/>
    <property type="project" value="UniProtKB-UniRule"/>
</dbReference>
<dbReference type="GO" id="GO:0006096">
    <property type="term" value="P:glycolytic process"/>
    <property type="evidence" value="ECO:0007669"/>
    <property type="project" value="UniProtKB-UniRule"/>
</dbReference>
<dbReference type="CDD" id="cd07067">
    <property type="entry name" value="HP_PGM_like"/>
    <property type="match status" value="1"/>
</dbReference>
<dbReference type="FunFam" id="3.40.50.1240:FF:000003">
    <property type="entry name" value="2,3-bisphosphoglycerate-dependent phosphoglycerate mutase"/>
    <property type="match status" value="1"/>
</dbReference>
<dbReference type="Gene3D" id="3.40.50.1240">
    <property type="entry name" value="Phosphoglycerate mutase-like"/>
    <property type="match status" value="1"/>
</dbReference>
<dbReference type="HAMAP" id="MF_01039">
    <property type="entry name" value="PGAM_GpmA"/>
    <property type="match status" value="1"/>
</dbReference>
<dbReference type="InterPro" id="IPR013078">
    <property type="entry name" value="His_Pase_superF_clade-1"/>
</dbReference>
<dbReference type="InterPro" id="IPR029033">
    <property type="entry name" value="His_PPase_superfam"/>
</dbReference>
<dbReference type="InterPro" id="IPR001345">
    <property type="entry name" value="PG/BPGM_mutase_AS"/>
</dbReference>
<dbReference type="InterPro" id="IPR005952">
    <property type="entry name" value="Phosphogly_mut1"/>
</dbReference>
<dbReference type="NCBIfam" id="TIGR01258">
    <property type="entry name" value="pgm_1"/>
    <property type="match status" value="1"/>
</dbReference>
<dbReference type="NCBIfam" id="NF010713">
    <property type="entry name" value="PRK14115.1"/>
    <property type="match status" value="1"/>
</dbReference>
<dbReference type="PANTHER" id="PTHR11931">
    <property type="entry name" value="PHOSPHOGLYCERATE MUTASE"/>
    <property type="match status" value="1"/>
</dbReference>
<dbReference type="Pfam" id="PF00300">
    <property type="entry name" value="His_Phos_1"/>
    <property type="match status" value="1"/>
</dbReference>
<dbReference type="PIRSF" id="PIRSF000709">
    <property type="entry name" value="6PFK_2-Ptase"/>
    <property type="match status" value="1"/>
</dbReference>
<dbReference type="SMART" id="SM00855">
    <property type="entry name" value="PGAM"/>
    <property type="match status" value="1"/>
</dbReference>
<dbReference type="SUPFAM" id="SSF53254">
    <property type="entry name" value="Phosphoglycerate mutase-like"/>
    <property type="match status" value="1"/>
</dbReference>
<dbReference type="PROSITE" id="PS00175">
    <property type="entry name" value="PG_MUTASE"/>
    <property type="match status" value="1"/>
</dbReference>
<feature type="chain" id="PRO_0000179940" description="2,3-bisphosphoglycerate-dependent phosphoglycerate mutase">
    <location>
        <begin position="1"/>
        <end position="249"/>
    </location>
</feature>
<feature type="active site" description="Tele-phosphohistidine intermediate" evidence="1">
    <location>
        <position position="10"/>
    </location>
</feature>
<feature type="active site" description="Proton donor/acceptor" evidence="1">
    <location>
        <position position="88"/>
    </location>
</feature>
<feature type="binding site" evidence="1">
    <location>
        <begin position="9"/>
        <end position="16"/>
    </location>
    <ligand>
        <name>substrate</name>
    </ligand>
</feature>
<feature type="binding site" evidence="1">
    <location>
        <begin position="22"/>
        <end position="23"/>
    </location>
    <ligand>
        <name>substrate</name>
    </ligand>
</feature>
<feature type="binding site" evidence="1">
    <location>
        <position position="61"/>
    </location>
    <ligand>
        <name>substrate</name>
    </ligand>
</feature>
<feature type="binding site" evidence="1">
    <location>
        <begin position="88"/>
        <end position="91"/>
    </location>
    <ligand>
        <name>substrate</name>
    </ligand>
</feature>
<feature type="binding site" evidence="1">
    <location>
        <position position="99"/>
    </location>
    <ligand>
        <name>substrate</name>
    </ligand>
</feature>
<feature type="binding site" evidence="1">
    <location>
        <begin position="115"/>
        <end position="116"/>
    </location>
    <ligand>
        <name>substrate</name>
    </ligand>
</feature>
<feature type="binding site" evidence="1">
    <location>
        <begin position="184"/>
        <end position="185"/>
    </location>
    <ligand>
        <name>substrate</name>
    </ligand>
</feature>
<feature type="site" description="Transition state stabilizer" evidence="1">
    <location>
        <position position="183"/>
    </location>
</feature>
<protein>
    <recommendedName>
        <fullName evidence="1">2,3-bisphosphoglycerate-dependent phosphoglycerate mutase</fullName>
        <shortName evidence="1">BPG-dependent PGAM</shortName>
        <shortName evidence="1">PGAM</shortName>
        <shortName evidence="1">Phosphoglyceromutase</shortName>
        <shortName evidence="1">dPGM</shortName>
        <ecNumber evidence="1">5.4.2.11</ecNumber>
    </recommendedName>
</protein>
<reference key="1">
    <citation type="journal article" date="2000" name="Nature">
        <title>The genome sequence of the plant pathogen Xylella fastidiosa.</title>
        <authorList>
            <person name="Simpson A.J.G."/>
            <person name="Reinach F.C."/>
            <person name="Arruda P."/>
            <person name="Abreu F.A."/>
            <person name="Acencio M."/>
            <person name="Alvarenga R."/>
            <person name="Alves L.M.C."/>
            <person name="Araya J.E."/>
            <person name="Baia G.S."/>
            <person name="Baptista C.S."/>
            <person name="Barros M.H."/>
            <person name="Bonaccorsi E.D."/>
            <person name="Bordin S."/>
            <person name="Bove J.M."/>
            <person name="Briones M.R.S."/>
            <person name="Bueno M.R.P."/>
            <person name="Camargo A.A."/>
            <person name="Camargo L.E.A."/>
            <person name="Carraro D.M."/>
            <person name="Carrer H."/>
            <person name="Colauto N.B."/>
            <person name="Colombo C."/>
            <person name="Costa F.F."/>
            <person name="Costa M.C.R."/>
            <person name="Costa-Neto C.M."/>
            <person name="Coutinho L.L."/>
            <person name="Cristofani M."/>
            <person name="Dias-Neto E."/>
            <person name="Docena C."/>
            <person name="El-Dorry H."/>
            <person name="Facincani A.P."/>
            <person name="Ferreira A.J.S."/>
            <person name="Ferreira V.C.A."/>
            <person name="Ferro J.A."/>
            <person name="Fraga J.S."/>
            <person name="Franca S.C."/>
            <person name="Franco M.C."/>
            <person name="Frohme M."/>
            <person name="Furlan L.R."/>
            <person name="Garnier M."/>
            <person name="Goldman G.H."/>
            <person name="Goldman M.H.S."/>
            <person name="Gomes S.L."/>
            <person name="Gruber A."/>
            <person name="Ho P.L."/>
            <person name="Hoheisel J.D."/>
            <person name="Junqueira M.L."/>
            <person name="Kemper E.L."/>
            <person name="Kitajima J.P."/>
            <person name="Krieger J.E."/>
            <person name="Kuramae E.E."/>
            <person name="Laigret F."/>
            <person name="Lambais M.R."/>
            <person name="Leite L.C.C."/>
            <person name="Lemos E.G.M."/>
            <person name="Lemos M.V.F."/>
            <person name="Lopes S.A."/>
            <person name="Lopes C.R."/>
            <person name="Machado J.A."/>
            <person name="Machado M.A."/>
            <person name="Madeira A.M.B.N."/>
            <person name="Madeira H.M.F."/>
            <person name="Marino C.L."/>
            <person name="Marques M.V."/>
            <person name="Martins E.A.L."/>
            <person name="Martins E.M.F."/>
            <person name="Matsukuma A.Y."/>
            <person name="Menck C.F.M."/>
            <person name="Miracca E.C."/>
            <person name="Miyaki C.Y."/>
            <person name="Monteiro-Vitorello C.B."/>
            <person name="Moon D.H."/>
            <person name="Nagai M.A."/>
            <person name="Nascimento A.L.T.O."/>
            <person name="Netto L.E.S."/>
            <person name="Nhani A. Jr."/>
            <person name="Nobrega F.G."/>
            <person name="Nunes L.R."/>
            <person name="Oliveira M.A."/>
            <person name="de Oliveira M.C."/>
            <person name="de Oliveira R.C."/>
            <person name="Palmieri D.A."/>
            <person name="Paris A."/>
            <person name="Peixoto B.R."/>
            <person name="Pereira G.A.G."/>
            <person name="Pereira H.A. Jr."/>
            <person name="Pesquero J.B."/>
            <person name="Quaggio R.B."/>
            <person name="Roberto P.G."/>
            <person name="Rodrigues V."/>
            <person name="de Rosa A.J.M."/>
            <person name="de Rosa V.E. Jr."/>
            <person name="de Sa R.G."/>
            <person name="Santelli R.V."/>
            <person name="Sawasaki H.E."/>
            <person name="da Silva A.C.R."/>
            <person name="da Silva A.M."/>
            <person name="da Silva F.R."/>
            <person name="Silva W.A. Jr."/>
            <person name="da Silveira J.F."/>
            <person name="Silvestri M.L.Z."/>
            <person name="Siqueira W.J."/>
            <person name="de Souza A.A."/>
            <person name="de Souza A.P."/>
            <person name="Terenzi M.F."/>
            <person name="Truffi D."/>
            <person name="Tsai S.M."/>
            <person name="Tsuhako M.H."/>
            <person name="Vallada H."/>
            <person name="Van Sluys M.A."/>
            <person name="Verjovski-Almeida S."/>
            <person name="Vettore A.L."/>
            <person name="Zago M.A."/>
            <person name="Zatz M."/>
            <person name="Meidanis J."/>
            <person name="Setubal J.C."/>
        </authorList>
    </citation>
    <scope>NUCLEOTIDE SEQUENCE [LARGE SCALE GENOMIC DNA]</scope>
    <source>
        <strain>9a5c</strain>
    </source>
</reference>
<sequence length="249" mass="28474">MTRKLVLLRHGQSQWNSMNRFTGWVDIGLTEQGHQEATMAGHLMKEEGLEFDVAHTSLLKRAIHTLQDALKALDQDWLPIYKSWRLNERHYGALQGLDKIDTAAKHGEEQVNIWRRSYDIQPPPIDLDDPSHPMRDRRYAALDRKVLPVTESLKNTLERVLPYWNDAIAPQLNDNKTVLISAHGNSLRALYKYLNQESDEKILNVNIPTGIPLLFELSDTLQVVSYRYLGDPDAAQRASEMVANQGKAK</sequence>
<accession>Q9PC88</accession>
<name>GPMA_XYLFA</name>
<evidence type="ECO:0000255" key="1">
    <source>
        <dbReference type="HAMAP-Rule" id="MF_01039"/>
    </source>
</evidence>
<proteinExistence type="inferred from homology"/>
<comment type="function">
    <text evidence="1">Catalyzes the interconversion of 2-phosphoglycerate and 3-phosphoglycerate.</text>
</comment>
<comment type="catalytic activity">
    <reaction evidence="1">
        <text>(2R)-2-phosphoglycerate = (2R)-3-phosphoglycerate</text>
        <dbReference type="Rhea" id="RHEA:15901"/>
        <dbReference type="ChEBI" id="CHEBI:58272"/>
        <dbReference type="ChEBI" id="CHEBI:58289"/>
        <dbReference type="EC" id="5.4.2.11"/>
    </reaction>
</comment>
<comment type="pathway">
    <text evidence="1">Carbohydrate degradation; glycolysis; pyruvate from D-glyceraldehyde 3-phosphate: step 3/5.</text>
</comment>
<comment type="subunit">
    <text evidence="1">Homodimer.</text>
</comment>
<comment type="similarity">
    <text evidence="1">Belongs to the phosphoglycerate mutase family. BPG-dependent PGAM subfamily.</text>
</comment>
<organism>
    <name type="scientific">Xylella fastidiosa (strain 9a5c)</name>
    <dbReference type="NCBI Taxonomy" id="160492"/>
    <lineage>
        <taxon>Bacteria</taxon>
        <taxon>Pseudomonadati</taxon>
        <taxon>Pseudomonadota</taxon>
        <taxon>Gammaproteobacteria</taxon>
        <taxon>Lysobacterales</taxon>
        <taxon>Lysobacteraceae</taxon>
        <taxon>Xylella</taxon>
    </lineage>
</organism>
<gene>
    <name evidence="1" type="primary">gpmA</name>
    <name type="ordered locus">XF_1893</name>
</gene>